<organism>
    <name type="scientific">Rhizobium etli (strain CIAT 652)</name>
    <dbReference type="NCBI Taxonomy" id="491916"/>
    <lineage>
        <taxon>Bacteria</taxon>
        <taxon>Pseudomonadati</taxon>
        <taxon>Pseudomonadota</taxon>
        <taxon>Alphaproteobacteria</taxon>
        <taxon>Hyphomicrobiales</taxon>
        <taxon>Rhizobiaceae</taxon>
        <taxon>Rhizobium/Agrobacterium group</taxon>
        <taxon>Rhizobium</taxon>
    </lineage>
</organism>
<sequence length="389" mass="40866">MTSRKPLARYRRIVIKIGSALLVDRKAGLKKAWLDAMCADIAGLKAKGIDVLVVSSGAIALGRSVLDLPSGALKLEESQAAAAVGQIALARAWSESLSRDEIVAGQILLTLGDTEERRRYLNARATINQLLKIGAVPIINENDTVATSEIRYGDNDRLAARVATMTGADLLILLSDIDGLYTAPPHLDPNATFLETIAEITPDIEAMAGGAASELSRGGMRTKIDAGKIATTSGCAMIIASGKPDSPLSSIENGARSSWFAPSGTPVTARKIWIAGQLQPAGELHVDDGAVTALGAGKSLLPAGVRSVSGLFSRGDTVAIVGPEGREIARGLVSYDAEDARRIAGRKSAEIEAILGYAGRAAMVHRDDMVMSAQLRQKSERQKKDAAHA</sequence>
<gene>
    <name evidence="1" type="primary">proB</name>
    <name type="ordered locus">RHECIAT_CH0004357</name>
</gene>
<protein>
    <recommendedName>
        <fullName evidence="1">Glutamate 5-kinase</fullName>
        <ecNumber evidence="1">2.7.2.11</ecNumber>
    </recommendedName>
    <alternativeName>
        <fullName evidence="1">Gamma-glutamyl kinase</fullName>
        <shortName evidence="1">GK</shortName>
    </alternativeName>
</protein>
<proteinExistence type="inferred from homology"/>
<reference key="1">
    <citation type="journal article" date="2010" name="Appl. Environ. Microbiol.">
        <title>Conserved symbiotic plasmid DNA sequences in the multireplicon pangenomic structure of Rhizobium etli.</title>
        <authorList>
            <person name="Gonzalez V."/>
            <person name="Acosta J.L."/>
            <person name="Santamaria R.I."/>
            <person name="Bustos P."/>
            <person name="Fernandez J.L."/>
            <person name="Hernandez Gonzalez I.L."/>
            <person name="Diaz R."/>
            <person name="Flores M."/>
            <person name="Palacios R."/>
            <person name="Mora J."/>
            <person name="Davila G."/>
        </authorList>
    </citation>
    <scope>NUCLEOTIDE SEQUENCE [LARGE SCALE GENOMIC DNA]</scope>
    <source>
        <strain>CIAT 652</strain>
    </source>
</reference>
<keyword id="KW-0028">Amino-acid biosynthesis</keyword>
<keyword id="KW-0067">ATP-binding</keyword>
<keyword id="KW-0963">Cytoplasm</keyword>
<keyword id="KW-0418">Kinase</keyword>
<keyword id="KW-0547">Nucleotide-binding</keyword>
<keyword id="KW-0641">Proline biosynthesis</keyword>
<keyword id="KW-0808">Transferase</keyword>
<feature type="chain" id="PRO_1000125252" description="Glutamate 5-kinase">
    <location>
        <begin position="1"/>
        <end position="389"/>
    </location>
</feature>
<feature type="domain" description="PUA" evidence="1">
    <location>
        <begin position="281"/>
        <end position="358"/>
    </location>
</feature>
<feature type="binding site" evidence="1">
    <location>
        <position position="16"/>
    </location>
    <ligand>
        <name>ATP</name>
        <dbReference type="ChEBI" id="CHEBI:30616"/>
    </ligand>
</feature>
<feature type="binding site" evidence="1">
    <location>
        <position position="56"/>
    </location>
    <ligand>
        <name>substrate</name>
    </ligand>
</feature>
<feature type="binding site" evidence="1">
    <location>
        <position position="143"/>
    </location>
    <ligand>
        <name>substrate</name>
    </ligand>
</feature>
<feature type="binding site" evidence="1">
    <location>
        <position position="155"/>
    </location>
    <ligand>
        <name>substrate</name>
    </ligand>
</feature>
<feature type="binding site" evidence="1">
    <location>
        <begin position="175"/>
        <end position="176"/>
    </location>
    <ligand>
        <name>ATP</name>
        <dbReference type="ChEBI" id="CHEBI:30616"/>
    </ligand>
</feature>
<evidence type="ECO:0000255" key="1">
    <source>
        <dbReference type="HAMAP-Rule" id="MF_00456"/>
    </source>
</evidence>
<accession>B3PRZ4</accession>
<comment type="function">
    <text evidence="1">Catalyzes the transfer of a phosphate group to glutamate to form L-glutamate 5-phosphate.</text>
</comment>
<comment type="catalytic activity">
    <reaction evidence="1">
        <text>L-glutamate + ATP = L-glutamyl 5-phosphate + ADP</text>
        <dbReference type="Rhea" id="RHEA:14877"/>
        <dbReference type="ChEBI" id="CHEBI:29985"/>
        <dbReference type="ChEBI" id="CHEBI:30616"/>
        <dbReference type="ChEBI" id="CHEBI:58274"/>
        <dbReference type="ChEBI" id="CHEBI:456216"/>
        <dbReference type="EC" id="2.7.2.11"/>
    </reaction>
</comment>
<comment type="pathway">
    <text evidence="1">Amino-acid biosynthesis; L-proline biosynthesis; L-glutamate 5-semialdehyde from L-glutamate: step 1/2.</text>
</comment>
<comment type="subcellular location">
    <subcellularLocation>
        <location evidence="1">Cytoplasm</location>
    </subcellularLocation>
</comment>
<comment type="similarity">
    <text evidence="1">Belongs to the glutamate 5-kinase family.</text>
</comment>
<dbReference type="EC" id="2.7.2.11" evidence="1"/>
<dbReference type="EMBL" id="CP001074">
    <property type="protein sequence ID" value="ACE93284.1"/>
    <property type="molecule type" value="Genomic_DNA"/>
</dbReference>
<dbReference type="SMR" id="B3PRZ4"/>
<dbReference type="KEGG" id="rec:RHECIAT_CH0004357"/>
<dbReference type="eggNOG" id="COG0263">
    <property type="taxonomic scope" value="Bacteria"/>
</dbReference>
<dbReference type="HOGENOM" id="CLU_025400_2_0_5"/>
<dbReference type="UniPathway" id="UPA00098">
    <property type="reaction ID" value="UER00359"/>
</dbReference>
<dbReference type="Proteomes" id="UP000008817">
    <property type="component" value="Chromosome"/>
</dbReference>
<dbReference type="GO" id="GO:0005829">
    <property type="term" value="C:cytosol"/>
    <property type="evidence" value="ECO:0007669"/>
    <property type="project" value="TreeGrafter"/>
</dbReference>
<dbReference type="GO" id="GO:0005524">
    <property type="term" value="F:ATP binding"/>
    <property type="evidence" value="ECO:0007669"/>
    <property type="project" value="UniProtKB-KW"/>
</dbReference>
<dbReference type="GO" id="GO:0004349">
    <property type="term" value="F:glutamate 5-kinase activity"/>
    <property type="evidence" value="ECO:0007669"/>
    <property type="project" value="UniProtKB-UniRule"/>
</dbReference>
<dbReference type="GO" id="GO:0003723">
    <property type="term" value="F:RNA binding"/>
    <property type="evidence" value="ECO:0007669"/>
    <property type="project" value="InterPro"/>
</dbReference>
<dbReference type="GO" id="GO:0055129">
    <property type="term" value="P:L-proline biosynthetic process"/>
    <property type="evidence" value="ECO:0007669"/>
    <property type="project" value="UniProtKB-UniRule"/>
</dbReference>
<dbReference type="CDD" id="cd04242">
    <property type="entry name" value="AAK_G5K_ProB"/>
    <property type="match status" value="1"/>
</dbReference>
<dbReference type="CDD" id="cd21157">
    <property type="entry name" value="PUA_G5K"/>
    <property type="match status" value="1"/>
</dbReference>
<dbReference type="FunFam" id="2.30.130.10:FF:000007">
    <property type="entry name" value="Glutamate 5-kinase"/>
    <property type="match status" value="1"/>
</dbReference>
<dbReference type="FunFam" id="3.40.1160.10:FF:000018">
    <property type="entry name" value="Glutamate 5-kinase"/>
    <property type="match status" value="1"/>
</dbReference>
<dbReference type="Gene3D" id="3.40.1160.10">
    <property type="entry name" value="Acetylglutamate kinase-like"/>
    <property type="match status" value="1"/>
</dbReference>
<dbReference type="Gene3D" id="2.30.130.10">
    <property type="entry name" value="PUA domain"/>
    <property type="match status" value="1"/>
</dbReference>
<dbReference type="HAMAP" id="MF_00456">
    <property type="entry name" value="ProB"/>
    <property type="match status" value="1"/>
</dbReference>
<dbReference type="InterPro" id="IPR036393">
    <property type="entry name" value="AceGlu_kinase-like_sf"/>
</dbReference>
<dbReference type="InterPro" id="IPR001048">
    <property type="entry name" value="Asp/Glu/Uridylate_kinase"/>
</dbReference>
<dbReference type="InterPro" id="IPR041739">
    <property type="entry name" value="G5K_ProB"/>
</dbReference>
<dbReference type="InterPro" id="IPR001057">
    <property type="entry name" value="Glu/AcGlu_kinase"/>
</dbReference>
<dbReference type="InterPro" id="IPR011529">
    <property type="entry name" value="Glu_5kinase"/>
</dbReference>
<dbReference type="InterPro" id="IPR005715">
    <property type="entry name" value="Glu_5kinase/COase_Synthase"/>
</dbReference>
<dbReference type="InterPro" id="IPR019797">
    <property type="entry name" value="Glutamate_5-kinase_CS"/>
</dbReference>
<dbReference type="InterPro" id="IPR002478">
    <property type="entry name" value="PUA"/>
</dbReference>
<dbReference type="InterPro" id="IPR015947">
    <property type="entry name" value="PUA-like_sf"/>
</dbReference>
<dbReference type="InterPro" id="IPR036974">
    <property type="entry name" value="PUA_sf"/>
</dbReference>
<dbReference type="NCBIfam" id="TIGR01027">
    <property type="entry name" value="proB"/>
    <property type="match status" value="1"/>
</dbReference>
<dbReference type="PANTHER" id="PTHR43654">
    <property type="entry name" value="GLUTAMATE 5-KINASE"/>
    <property type="match status" value="1"/>
</dbReference>
<dbReference type="PANTHER" id="PTHR43654:SF1">
    <property type="entry name" value="ISOPENTENYL PHOSPHATE KINASE"/>
    <property type="match status" value="1"/>
</dbReference>
<dbReference type="Pfam" id="PF00696">
    <property type="entry name" value="AA_kinase"/>
    <property type="match status" value="1"/>
</dbReference>
<dbReference type="Pfam" id="PF01472">
    <property type="entry name" value="PUA"/>
    <property type="match status" value="1"/>
</dbReference>
<dbReference type="PIRSF" id="PIRSF000729">
    <property type="entry name" value="GK"/>
    <property type="match status" value="1"/>
</dbReference>
<dbReference type="PRINTS" id="PR00474">
    <property type="entry name" value="GLU5KINASE"/>
</dbReference>
<dbReference type="SMART" id="SM00359">
    <property type="entry name" value="PUA"/>
    <property type="match status" value="1"/>
</dbReference>
<dbReference type="SUPFAM" id="SSF53633">
    <property type="entry name" value="Carbamate kinase-like"/>
    <property type="match status" value="1"/>
</dbReference>
<dbReference type="SUPFAM" id="SSF88697">
    <property type="entry name" value="PUA domain-like"/>
    <property type="match status" value="1"/>
</dbReference>
<dbReference type="PROSITE" id="PS00902">
    <property type="entry name" value="GLUTAMATE_5_KINASE"/>
    <property type="match status" value="1"/>
</dbReference>
<dbReference type="PROSITE" id="PS50890">
    <property type="entry name" value="PUA"/>
    <property type="match status" value="1"/>
</dbReference>
<name>PROB_RHIE6</name>